<organism>
    <name type="scientific">Bacillus cereus (strain G9842)</name>
    <dbReference type="NCBI Taxonomy" id="405531"/>
    <lineage>
        <taxon>Bacteria</taxon>
        <taxon>Bacillati</taxon>
        <taxon>Bacillota</taxon>
        <taxon>Bacilli</taxon>
        <taxon>Bacillales</taxon>
        <taxon>Bacillaceae</taxon>
        <taxon>Bacillus</taxon>
        <taxon>Bacillus cereus group</taxon>
    </lineage>
</organism>
<feature type="chain" id="PRO_1000143218" description="Small ribosomal subunit protein uS17">
    <location>
        <begin position="1"/>
        <end position="87"/>
    </location>
</feature>
<reference key="1">
    <citation type="submission" date="2008-10" db="EMBL/GenBank/DDBJ databases">
        <title>Genome sequence of Bacillus cereus G9842.</title>
        <authorList>
            <person name="Dodson R.J."/>
            <person name="Durkin A.S."/>
            <person name="Rosovitz M.J."/>
            <person name="Rasko D.A."/>
            <person name="Hoffmaster A."/>
            <person name="Ravel J."/>
            <person name="Sutton G."/>
        </authorList>
    </citation>
    <scope>NUCLEOTIDE SEQUENCE [LARGE SCALE GENOMIC DNA]</scope>
    <source>
        <strain>G9842</strain>
    </source>
</reference>
<accession>B7IT28</accession>
<dbReference type="EMBL" id="CP001186">
    <property type="protein sequence ID" value="ACK95301.1"/>
    <property type="molecule type" value="Genomic_DNA"/>
</dbReference>
<dbReference type="RefSeq" id="WP_000004106.1">
    <property type="nucleotide sequence ID" value="NC_011772.1"/>
</dbReference>
<dbReference type="SMR" id="B7IT28"/>
<dbReference type="GeneID" id="93010934"/>
<dbReference type="KEGG" id="bcg:BCG9842_B5186"/>
<dbReference type="HOGENOM" id="CLU_073626_1_0_9"/>
<dbReference type="Proteomes" id="UP000006744">
    <property type="component" value="Chromosome"/>
</dbReference>
<dbReference type="GO" id="GO:0022627">
    <property type="term" value="C:cytosolic small ribosomal subunit"/>
    <property type="evidence" value="ECO:0007669"/>
    <property type="project" value="TreeGrafter"/>
</dbReference>
<dbReference type="GO" id="GO:0019843">
    <property type="term" value="F:rRNA binding"/>
    <property type="evidence" value="ECO:0007669"/>
    <property type="project" value="UniProtKB-UniRule"/>
</dbReference>
<dbReference type="GO" id="GO:0003735">
    <property type="term" value="F:structural constituent of ribosome"/>
    <property type="evidence" value="ECO:0007669"/>
    <property type="project" value="InterPro"/>
</dbReference>
<dbReference type="GO" id="GO:0006412">
    <property type="term" value="P:translation"/>
    <property type="evidence" value="ECO:0007669"/>
    <property type="project" value="UniProtKB-UniRule"/>
</dbReference>
<dbReference type="CDD" id="cd00364">
    <property type="entry name" value="Ribosomal_uS17"/>
    <property type="match status" value="1"/>
</dbReference>
<dbReference type="FunFam" id="2.40.50.140:FF:000026">
    <property type="entry name" value="30S ribosomal protein S17"/>
    <property type="match status" value="1"/>
</dbReference>
<dbReference type="Gene3D" id="2.40.50.140">
    <property type="entry name" value="Nucleic acid-binding proteins"/>
    <property type="match status" value="1"/>
</dbReference>
<dbReference type="HAMAP" id="MF_01345_B">
    <property type="entry name" value="Ribosomal_uS17_B"/>
    <property type="match status" value="1"/>
</dbReference>
<dbReference type="InterPro" id="IPR012340">
    <property type="entry name" value="NA-bd_OB-fold"/>
</dbReference>
<dbReference type="InterPro" id="IPR000266">
    <property type="entry name" value="Ribosomal_uS17"/>
</dbReference>
<dbReference type="InterPro" id="IPR019984">
    <property type="entry name" value="Ribosomal_uS17_bact/chlr"/>
</dbReference>
<dbReference type="InterPro" id="IPR019979">
    <property type="entry name" value="Ribosomal_uS17_CS"/>
</dbReference>
<dbReference type="NCBIfam" id="NF004123">
    <property type="entry name" value="PRK05610.1"/>
    <property type="match status" value="1"/>
</dbReference>
<dbReference type="NCBIfam" id="TIGR03635">
    <property type="entry name" value="uS17_bact"/>
    <property type="match status" value="1"/>
</dbReference>
<dbReference type="PANTHER" id="PTHR10744">
    <property type="entry name" value="40S RIBOSOMAL PROTEIN S11 FAMILY MEMBER"/>
    <property type="match status" value="1"/>
</dbReference>
<dbReference type="PANTHER" id="PTHR10744:SF1">
    <property type="entry name" value="SMALL RIBOSOMAL SUBUNIT PROTEIN US17M"/>
    <property type="match status" value="1"/>
</dbReference>
<dbReference type="Pfam" id="PF00366">
    <property type="entry name" value="Ribosomal_S17"/>
    <property type="match status" value="1"/>
</dbReference>
<dbReference type="PRINTS" id="PR00973">
    <property type="entry name" value="RIBOSOMALS17"/>
</dbReference>
<dbReference type="SUPFAM" id="SSF50249">
    <property type="entry name" value="Nucleic acid-binding proteins"/>
    <property type="match status" value="1"/>
</dbReference>
<dbReference type="PROSITE" id="PS00056">
    <property type="entry name" value="RIBOSOMAL_S17"/>
    <property type="match status" value="1"/>
</dbReference>
<proteinExistence type="inferred from homology"/>
<name>RS17_BACC2</name>
<evidence type="ECO:0000255" key="1">
    <source>
        <dbReference type="HAMAP-Rule" id="MF_01345"/>
    </source>
</evidence>
<evidence type="ECO:0000305" key="2"/>
<gene>
    <name evidence="1" type="primary">rpsQ</name>
    <name type="ordered locus">BCG9842_B5186</name>
</gene>
<protein>
    <recommendedName>
        <fullName evidence="1">Small ribosomal subunit protein uS17</fullName>
    </recommendedName>
    <alternativeName>
        <fullName evidence="2">30S ribosomal protein S17</fullName>
    </alternativeName>
</protein>
<comment type="function">
    <text evidence="1">One of the primary rRNA binding proteins, it binds specifically to the 5'-end of 16S ribosomal RNA.</text>
</comment>
<comment type="subunit">
    <text evidence="1">Part of the 30S ribosomal subunit.</text>
</comment>
<comment type="similarity">
    <text evidence="1">Belongs to the universal ribosomal protein uS17 family.</text>
</comment>
<keyword id="KW-0687">Ribonucleoprotein</keyword>
<keyword id="KW-0689">Ribosomal protein</keyword>
<keyword id="KW-0694">RNA-binding</keyword>
<keyword id="KW-0699">rRNA-binding</keyword>
<sequence length="87" mass="10189">MSERNQRKVYTGRVVSDKMDKTITVLVETYKTHSLYGKRVKYSKKYKAHDEQNQAKLGDIVKIMETRPLSATKRFRLVEIVEEAVII</sequence>